<evidence type="ECO:0000250" key="1">
    <source>
        <dbReference type="UniProtKB" id="Q9Z1X2"/>
    </source>
</evidence>
<evidence type="ECO:0000255" key="2"/>
<evidence type="ECO:0000256" key="3">
    <source>
        <dbReference type="SAM" id="MobiDB-lite"/>
    </source>
</evidence>
<evidence type="ECO:0000305" key="4"/>
<evidence type="ECO:0007744" key="5">
    <source>
    </source>
</evidence>
<protein>
    <recommendedName>
        <fullName>Phosphatidylserine synthase 2</fullName>
        <shortName>PSS-2</shortName>
        <shortName>PtdSer synthase 2</shortName>
        <ecNumber evidence="1">2.7.8.29</ecNumber>
    </recommendedName>
    <alternativeName>
        <fullName>Serine-exchange enzyme II</fullName>
    </alternativeName>
</protein>
<accession>B2GV22</accession>
<reference key="1">
    <citation type="journal article" date="2004" name="Nature">
        <title>Genome sequence of the Brown Norway rat yields insights into mammalian evolution.</title>
        <authorList>
            <person name="Gibbs R.A."/>
            <person name="Weinstock G.M."/>
            <person name="Metzker M.L."/>
            <person name="Muzny D.M."/>
            <person name="Sodergren E.J."/>
            <person name="Scherer S."/>
            <person name="Scott G."/>
            <person name="Steffen D."/>
            <person name="Worley K.C."/>
            <person name="Burch P.E."/>
            <person name="Okwuonu G."/>
            <person name="Hines S."/>
            <person name="Lewis L."/>
            <person name="Deramo C."/>
            <person name="Delgado O."/>
            <person name="Dugan-Rocha S."/>
            <person name="Miner G."/>
            <person name="Morgan M."/>
            <person name="Hawes A."/>
            <person name="Gill R."/>
            <person name="Holt R.A."/>
            <person name="Adams M.D."/>
            <person name="Amanatides P.G."/>
            <person name="Baden-Tillson H."/>
            <person name="Barnstead M."/>
            <person name="Chin S."/>
            <person name="Evans C.A."/>
            <person name="Ferriera S."/>
            <person name="Fosler C."/>
            <person name="Glodek A."/>
            <person name="Gu Z."/>
            <person name="Jennings D."/>
            <person name="Kraft C.L."/>
            <person name="Nguyen T."/>
            <person name="Pfannkoch C.M."/>
            <person name="Sitter C."/>
            <person name="Sutton G.G."/>
            <person name="Venter J.C."/>
            <person name="Woodage T."/>
            <person name="Smith D."/>
            <person name="Lee H.-M."/>
            <person name="Gustafson E."/>
            <person name="Cahill P."/>
            <person name="Kana A."/>
            <person name="Doucette-Stamm L."/>
            <person name="Weinstock K."/>
            <person name="Fechtel K."/>
            <person name="Weiss R.B."/>
            <person name="Dunn D.M."/>
            <person name="Green E.D."/>
            <person name="Blakesley R.W."/>
            <person name="Bouffard G.G."/>
            <person name="De Jong P.J."/>
            <person name="Osoegawa K."/>
            <person name="Zhu B."/>
            <person name="Marra M."/>
            <person name="Schein J."/>
            <person name="Bosdet I."/>
            <person name="Fjell C."/>
            <person name="Jones S."/>
            <person name="Krzywinski M."/>
            <person name="Mathewson C."/>
            <person name="Siddiqui A."/>
            <person name="Wye N."/>
            <person name="McPherson J."/>
            <person name="Zhao S."/>
            <person name="Fraser C.M."/>
            <person name="Shetty J."/>
            <person name="Shatsman S."/>
            <person name="Geer K."/>
            <person name="Chen Y."/>
            <person name="Abramzon S."/>
            <person name="Nierman W.C."/>
            <person name="Havlak P.H."/>
            <person name="Chen R."/>
            <person name="Durbin K.J."/>
            <person name="Egan A."/>
            <person name="Ren Y."/>
            <person name="Song X.-Z."/>
            <person name="Li B."/>
            <person name="Liu Y."/>
            <person name="Qin X."/>
            <person name="Cawley S."/>
            <person name="Cooney A.J."/>
            <person name="D'Souza L.M."/>
            <person name="Martin K."/>
            <person name="Wu J.Q."/>
            <person name="Gonzalez-Garay M.L."/>
            <person name="Jackson A.R."/>
            <person name="Kalafus K.J."/>
            <person name="McLeod M.P."/>
            <person name="Milosavljevic A."/>
            <person name="Virk D."/>
            <person name="Volkov A."/>
            <person name="Wheeler D.A."/>
            <person name="Zhang Z."/>
            <person name="Bailey J.A."/>
            <person name="Eichler E.E."/>
            <person name="Tuzun E."/>
            <person name="Birney E."/>
            <person name="Mongin E."/>
            <person name="Ureta-Vidal A."/>
            <person name="Woodwark C."/>
            <person name="Zdobnov E."/>
            <person name="Bork P."/>
            <person name="Suyama M."/>
            <person name="Torrents D."/>
            <person name="Alexandersson M."/>
            <person name="Trask B.J."/>
            <person name="Young J.M."/>
            <person name="Huang H."/>
            <person name="Wang H."/>
            <person name="Xing H."/>
            <person name="Daniels S."/>
            <person name="Gietzen D."/>
            <person name="Schmidt J."/>
            <person name="Stevens K."/>
            <person name="Vitt U."/>
            <person name="Wingrove J."/>
            <person name="Camara F."/>
            <person name="Mar Alba M."/>
            <person name="Abril J.F."/>
            <person name="Guigo R."/>
            <person name="Smit A."/>
            <person name="Dubchak I."/>
            <person name="Rubin E.M."/>
            <person name="Couronne O."/>
            <person name="Poliakov A."/>
            <person name="Huebner N."/>
            <person name="Ganten D."/>
            <person name="Goesele C."/>
            <person name="Hummel O."/>
            <person name="Kreitler T."/>
            <person name="Lee Y.-A."/>
            <person name="Monti J."/>
            <person name="Schulz H."/>
            <person name="Zimdahl H."/>
            <person name="Himmelbauer H."/>
            <person name="Lehrach H."/>
            <person name="Jacob H.J."/>
            <person name="Bromberg S."/>
            <person name="Gullings-Handley J."/>
            <person name="Jensen-Seaman M.I."/>
            <person name="Kwitek A.E."/>
            <person name="Lazar J."/>
            <person name="Pasko D."/>
            <person name="Tonellato P.J."/>
            <person name="Twigger S."/>
            <person name="Ponting C.P."/>
            <person name="Duarte J.M."/>
            <person name="Rice S."/>
            <person name="Goodstadt L."/>
            <person name="Beatson S.A."/>
            <person name="Emes R.D."/>
            <person name="Winter E.E."/>
            <person name="Webber C."/>
            <person name="Brandt P."/>
            <person name="Nyakatura G."/>
            <person name="Adetobi M."/>
            <person name="Chiaromonte F."/>
            <person name="Elnitski L."/>
            <person name="Eswara P."/>
            <person name="Hardison R.C."/>
            <person name="Hou M."/>
            <person name="Kolbe D."/>
            <person name="Makova K."/>
            <person name="Miller W."/>
            <person name="Nekrutenko A."/>
            <person name="Riemer C."/>
            <person name="Schwartz S."/>
            <person name="Taylor J."/>
            <person name="Yang S."/>
            <person name="Zhang Y."/>
            <person name="Lindpaintner K."/>
            <person name="Andrews T.D."/>
            <person name="Caccamo M."/>
            <person name="Clamp M."/>
            <person name="Clarke L."/>
            <person name="Curwen V."/>
            <person name="Durbin R.M."/>
            <person name="Eyras E."/>
            <person name="Searle S.M."/>
            <person name="Cooper G.M."/>
            <person name="Batzoglou S."/>
            <person name="Brudno M."/>
            <person name="Sidow A."/>
            <person name="Stone E.A."/>
            <person name="Payseur B.A."/>
            <person name="Bourque G."/>
            <person name="Lopez-Otin C."/>
            <person name="Puente X.S."/>
            <person name="Chakrabarti K."/>
            <person name="Chatterji S."/>
            <person name="Dewey C."/>
            <person name="Pachter L."/>
            <person name="Bray N."/>
            <person name="Yap V.B."/>
            <person name="Caspi A."/>
            <person name="Tesler G."/>
            <person name="Pevzner P.A."/>
            <person name="Haussler D."/>
            <person name="Roskin K.M."/>
            <person name="Baertsch R."/>
            <person name="Clawson H."/>
            <person name="Furey T.S."/>
            <person name="Hinrichs A.S."/>
            <person name="Karolchik D."/>
            <person name="Kent W.J."/>
            <person name="Rosenbloom K.R."/>
            <person name="Trumbower H."/>
            <person name="Weirauch M."/>
            <person name="Cooper D.N."/>
            <person name="Stenson P.D."/>
            <person name="Ma B."/>
            <person name="Brent M."/>
            <person name="Arumugam M."/>
            <person name="Shteynberg D."/>
            <person name="Copley R.R."/>
            <person name="Taylor M.S."/>
            <person name="Riethman H."/>
            <person name="Mudunuri U."/>
            <person name="Peterson J."/>
            <person name="Guyer M."/>
            <person name="Felsenfeld A."/>
            <person name="Old S."/>
            <person name="Mockrin S."/>
            <person name="Collins F.S."/>
        </authorList>
    </citation>
    <scope>NUCLEOTIDE SEQUENCE [LARGE SCALE GENOMIC DNA]</scope>
    <source>
        <strain>Brown Norway</strain>
    </source>
</reference>
<reference key="2">
    <citation type="submission" date="2005-07" db="EMBL/GenBank/DDBJ databases">
        <authorList>
            <person name="Mural R.J."/>
            <person name="Adams M.D."/>
            <person name="Myers E.W."/>
            <person name="Smith H.O."/>
            <person name="Venter J.C."/>
        </authorList>
    </citation>
    <scope>NUCLEOTIDE SEQUENCE [LARGE SCALE GENOMIC DNA]</scope>
</reference>
<reference key="3">
    <citation type="journal article" date="2004" name="Genome Res.">
        <title>The status, quality, and expansion of the NIH full-length cDNA project: the Mammalian Gene Collection (MGC).</title>
        <authorList>
            <consortium name="The MGC Project Team"/>
        </authorList>
    </citation>
    <scope>NUCLEOTIDE SEQUENCE [LARGE SCALE MRNA]</scope>
    <source>
        <tissue>Testis</tissue>
    </source>
</reference>
<reference key="4">
    <citation type="journal article" date="2012" name="Nat. Commun.">
        <title>Quantitative maps of protein phosphorylation sites across 14 different rat organs and tissues.</title>
        <authorList>
            <person name="Lundby A."/>
            <person name="Secher A."/>
            <person name="Lage K."/>
            <person name="Nordsborg N.B."/>
            <person name="Dmytriyev A."/>
            <person name="Lundby C."/>
            <person name="Olsen J.V."/>
        </authorList>
    </citation>
    <scope>PHOSPHORYLATION [LARGE SCALE ANALYSIS] AT SER-12 AND SER-16</scope>
    <scope>IDENTIFICATION BY MASS SPECTROMETRY [LARGE SCALE ANALYSIS]</scope>
</reference>
<comment type="function">
    <text evidence="1">Catalyzes a base-exchange reaction in which the polar head group of phosphatidylethanolamine (PE) or phosphatidylcholine (PC) is replaced by L-serine (By similarity). Catalyzes the conversion of phosphatatidylethanolamine and does not act on phosphatidylcholine (By similarity). Can utilize both phosphatidylethanolamine (PE) plasmalogen and diacyl PE as substrate and the latter is six times better utilized, indicating the importance of an ester linkage at the sn-1 position (By similarity). Although it shows no sn-1 fatty acyl preference, exhibits significant preference towards docosahexaenoic acid (22:6n-3) compared with 18:1 or 20:4 at the sn-2 position (By similarity).</text>
</comment>
<comment type="catalytic activity">
    <reaction evidence="1">
        <text>a 1,2-diacyl-sn-glycero-3-phosphoethanolamine + L-serine = a 1,2-diacyl-sn-glycero-3-phospho-L-serine + ethanolamine</text>
        <dbReference type="Rhea" id="RHEA:27606"/>
        <dbReference type="ChEBI" id="CHEBI:33384"/>
        <dbReference type="ChEBI" id="CHEBI:57262"/>
        <dbReference type="ChEBI" id="CHEBI:57603"/>
        <dbReference type="ChEBI" id="CHEBI:64612"/>
        <dbReference type="EC" id="2.7.8.29"/>
    </reaction>
    <physiologicalReaction direction="left-to-right" evidence="1">
        <dbReference type="Rhea" id="RHEA:27607"/>
    </physiologicalReaction>
</comment>
<comment type="catalytic activity">
    <reaction evidence="1">
        <text>1-hexadecanoyl-2-(9Z-octadecenoyl)-sn-glycero-3-phosphoethanolamine + L-serine = 1-hexadecanoyl-2-(9Z-octadecenoyl)-sn-glycero-3-phospho-L-serine + ethanolamine</text>
        <dbReference type="Rhea" id="RHEA:41484"/>
        <dbReference type="ChEBI" id="CHEBI:33384"/>
        <dbReference type="ChEBI" id="CHEBI:57603"/>
        <dbReference type="ChEBI" id="CHEBI:73007"/>
        <dbReference type="ChEBI" id="CHEBI:75029"/>
    </reaction>
    <physiologicalReaction direction="left-to-right" evidence="1">
        <dbReference type="Rhea" id="RHEA:41485"/>
    </physiologicalReaction>
</comment>
<comment type="catalytic activity">
    <reaction evidence="1">
        <text>1-hexadecanoyl-2-(4Z,7Z,10Z,13Z,16Z,19Z-docosahexaenoyl)-sn-glycero-3-phosphoethanolamine + L-serine = 1-hexadecanoyl-2-(4Z,7Z,10Z,13Z,16Z,19Z-docosahexaenoyl)-sn-glycero-3-phosphoserine + ethanolamine</text>
        <dbReference type="Rhea" id="RHEA:41488"/>
        <dbReference type="ChEBI" id="CHEBI:33384"/>
        <dbReference type="ChEBI" id="CHEBI:57603"/>
        <dbReference type="ChEBI" id="CHEBI:78261"/>
        <dbReference type="ChEBI" id="CHEBI:78262"/>
    </reaction>
    <physiologicalReaction direction="left-to-right" evidence="1">
        <dbReference type="Rhea" id="RHEA:41489"/>
    </physiologicalReaction>
</comment>
<comment type="catalytic activity">
    <reaction evidence="1">
        <text>1-octadecanoyl-2-(5Z,8Z,11Z,14Z)-eicosatetraenoyl-sn-glycero-3-phosphoethanolamine + L-serine = 1-octadecanoyl-2-(5Z,8Z,11Z,14Z)-eicosatetraenoyl-sn-glycero-3-phosphoserine + ethanolamine</text>
        <dbReference type="Rhea" id="RHEA:41500"/>
        <dbReference type="ChEBI" id="CHEBI:33384"/>
        <dbReference type="ChEBI" id="CHEBI:57603"/>
        <dbReference type="ChEBI" id="CHEBI:78268"/>
        <dbReference type="ChEBI" id="CHEBI:78269"/>
    </reaction>
    <physiologicalReaction direction="left-to-right" evidence="1">
        <dbReference type="Rhea" id="RHEA:41501"/>
    </physiologicalReaction>
</comment>
<comment type="catalytic activity">
    <reaction evidence="1">
        <text>1-octadecanoyl-2-(4Z,7Z,10Z,13Z,16Z,19Z-docosahexaenoyl)-sn-glycero-3-phosphoethanolamine + L-serine = 1-octadecanoyl-2-(4Z,7Z,10Z,13Z,16Z,19Z-docosahexaenoyl)-sn-glycero-3-phosphoserine + ethanolamine</text>
        <dbReference type="Rhea" id="RHEA:41492"/>
        <dbReference type="ChEBI" id="CHEBI:33384"/>
        <dbReference type="ChEBI" id="CHEBI:57603"/>
        <dbReference type="ChEBI" id="CHEBI:78265"/>
        <dbReference type="ChEBI" id="CHEBI:78266"/>
    </reaction>
    <physiologicalReaction direction="left-to-right" evidence="1">
        <dbReference type="Rhea" id="RHEA:41493"/>
    </physiologicalReaction>
</comment>
<comment type="catalytic activity">
    <reaction evidence="1">
        <text>1-(1Z-octadecenyl)-2-(4Z,7Z,10Z,13Z,16Z,19Z-docosahexaenoyl)-sn-glycero-3-phosphoethanolamine + L-serine = 1-(1Z-octadecenyl)-2-(4Z,7Z,10Z,13Z,16Z,19Z-docosahexaenoyl)-sn-glycero-3-phospho-L-serine + ethanolamine</text>
        <dbReference type="Rhea" id="RHEA:41496"/>
        <dbReference type="ChEBI" id="CHEBI:33384"/>
        <dbReference type="ChEBI" id="CHEBI:57603"/>
        <dbReference type="ChEBI" id="CHEBI:78263"/>
        <dbReference type="ChEBI" id="CHEBI:78264"/>
    </reaction>
    <physiologicalReaction direction="left-to-right" evidence="1">
        <dbReference type="Rhea" id="RHEA:41497"/>
    </physiologicalReaction>
</comment>
<comment type="catalytic activity">
    <reaction evidence="1">
        <text>1-octadecanoyl-2-(9Z-octadecenoyl)-sn-glycero-3-phosphoethanolamine + L-serine = 1-octadecanoyl-2-(9Z-octadecenoyl)-sn-glycero-3-phospho-L-serine + ethanolamine</text>
        <dbReference type="Rhea" id="RHEA:40795"/>
        <dbReference type="ChEBI" id="CHEBI:33384"/>
        <dbReference type="ChEBI" id="CHEBI:57603"/>
        <dbReference type="ChEBI" id="CHEBI:75038"/>
        <dbReference type="ChEBI" id="CHEBI:78260"/>
    </reaction>
    <physiologicalReaction direction="left-to-right" evidence="1">
        <dbReference type="Rhea" id="RHEA:40796"/>
    </physiologicalReaction>
</comment>
<comment type="catalytic activity">
    <reaction evidence="1">
        <text>1-(1Z-octadecenyl)-2-(9Z-octadecenoyl)-sn-glycero-3-phosphoethanolamine + L-serine = 1-(1Z-octadecenyl)-2-(9Z-octadecenoyl)-sn-glycero-3-phospho-L-serine + ethanolamine</text>
        <dbReference type="Rhea" id="RHEA:41600"/>
        <dbReference type="ChEBI" id="CHEBI:33384"/>
        <dbReference type="ChEBI" id="CHEBI:57603"/>
        <dbReference type="ChEBI" id="CHEBI:78340"/>
        <dbReference type="ChEBI" id="CHEBI:78341"/>
    </reaction>
    <physiologicalReaction direction="left-to-right" evidence="1">
        <dbReference type="Rhea" id="RHEA:41601"/>
    </physiologicalReaction>
</comment>
<comment type="catalytic activity">
    <reaction evidence="1">
        <text>1-(1Z-octadecenyl)-2-(5Z,8Z,11Z,14Z- eicosatetraenoyl)-sn-glycero-3-phosphoethanolamine + L-serine = 1-(1Z-octadecenyl)-2-(5Z,8Z,11Z,14Z-eicosatetraenoyl)-sn-glycero-3-phospho-L-serine + ethanolamine</text>
        <dbReference type="Rhea" id="RHEA:41604"/>
        <dbReference type="ChEBI" id="CHEBI:33384"/>
        <dbReference type="ChEBI" id="CHEBI:57603"/>
        <dbReference type="ChEBI" id="CHEBI:78342"/>
        <dbReference type="ChEBI" id="CHEBI:78343"/>
    </reaction>
    <physiologicalReaction direction="left-to-right" evidence="1">
        <dbReference type="Rhea" id="RHEA:41605"/>
    </physiologicalReaction>
</comment>
<comment type="pathway">
    <text>Phospholipid metabolism; phosphatidylserine biosynthesis.</text>
</comment>
<comment type="subcellular location">
    <subcellularLocation>
        <location evidence="1">Endoplasmic reticulum membrane</location>
        <topology evidence="2">Multi-pass membrane protein</topology>
    </subcellularLocation>
    <text evidence="1">Highly enriched in the mitochondria-associated membrane (MAM).</text>
</comment>
<comment type="similarity">
    <text evidence="4">Belongs to the phosphatidyl serine synthase family.</text>
</comment>
<organism>
    <name type="scientific">Rattus norvegicus</name>
    <name type="common">Rat</name>
    <dbReference type="NCBI Taxonomy" id="10116"/>
    <lineage>
        <taxon>Eukaryota</taxon>
        <taxon>Metazoa</taxon>
        <taxon>Chordata</taxon>
        <taxon>Craniata</taxon>
        <taxon>Vertebrata</taxon>
        <taxon>Euteleostomi</taxon>
        <taxon>Mammalia</taxon>
        <taxon>Eutheria</taxon>
        <taxon>Euarchontoglires</taxon>
        <taxon>Glires</taxon>
        <taxon>Rodentia</taxon>
        <taxon>Myomorpha</taxon>
        <taxon>Muroidea</taxon>
        <taxon>Muridae</taxon>
        <taxon>Murinae</taxon>
        <taxon>Rattus</taxon>
    </lineage>
</organism>
<feature type="chain" id="PRO_0000416034" description="Phosphatidylserine synthase 2">
    <location>
        <begin position="1"/>
        <end position="471"/>
    </location>
</feature>
<feature type="topological domain" description="Cytoplasmic" evidence="2">
    <location>
        <begin position="1"/>
        <end position="40"/>
    </location>
</feature>
<feature type="transmembrane region" description="Helical" evidence="2">
    <location>
        <begin position="41"/>
        <end position="61"/>
    </location>
</feature>
<feature type="topological domain" description="Lumenal" evidence="2">
    <location>
        <begin position="62"/>
        <end position="74"/>
    </location>
</feature>
<feature type="transmembrane region" description="Helical" evidence="2">
    <location>
        <begin position="75"/>
        <end position="95"/>
    </location>
</feature>
<feature type="topological domain" description="Cytoplasmic" evidence="2">
    <location>
        <begin position="96"/>
        <end position="104"/>
    </location>
</feature>
<feature type="transmembrane region" description="Helical" evidence="2">
    <location>
        <begin position="105"/>
        <end position="125"/>
    </location>
</feature>
<feature type="topological domain" description="Lumenal" evidence="2">
    <location>
        <begin position="126"/>
        <end position="291"/>
    </location>
</feature>
<feature type="transmembrane region" description="Helical" evidence="2">
    <location>
        <begin position="292"/>
        <end position="312"/>
    </location>
</feature>
<feature type="topological domain" description="Cytoplasmic" evidence="2">
    <location>
        <position position="313"/>
    </location>
</feature>
<feature type="transmembrane region" description="Helical" evidence="2">
    <location>
        <begin position="314"/>
        <end position="334"/>
    </location>
</feature>
<feature type="topological domain" description="Lumenal" evidence="2">
    <location>
        <begin position="335"/>
        <end position="354"/>
    </location>
</feature>
<feature type="transmembrane region" description="Helical" evidence="2">
    <location>
        <begin position="355"/>
        <end position="375"/>
    </location>
</feature>
<feature type="topological domain" description="Cytoplasmic" evidence="2">
    <location>
        <begin position="376"/>
        <end position="381"/>
    </location>
</feature>
<feature type="transmembrane region" description="Helical" evidence="2">
    <location>
        <begin position="382"/>
        <end position="402"/>
    </location>
</feature>
<feature type="topological domain" description="Lumenal" evidence="2">
    <location>
        <begin position="403"/>
        <end position="471"/>
    </location>
</feature>
<feature type="region of interest" description="Disordered" evidence="3">
    <location>
        <begin position="1"/>
        <end position="26"/>
    </location>
</feature>
<feature type="region of interest" description="Disordered" evidence="3">
    <location>
        <begin position="423"/>
        <end position="471"/>
    </location>
</feature>
<feature type="modified residue" description="Phosphoserine" evidence="5">
    <location>
        <position position="12"/>
    </location>
</feature>
<feature type="modified residue" description="Phosphoserine" evidence="1">
    <location>
        <position position="14"/>
    </location>
</feature>
<feature type="modified residue" description="Phosphoserine" evidence="5">
    <location>
        <position position="16"/>
    </location>
</feature>
<feature type="glycosylation site" description="N-linked (GlcNAc...) asparagine" evidence="2">
    <location>
        <position position="159"/>
    </location>
</feature>
<name>PTSS2_RAT</name>
<gene>
    <name type="primary">Ptdss2</name>
</gene>
<proteinExistence type="evidence at protein level"/>
<keyword id="KW-0256">Endoplasmic reticulum</keyword>
<keyword id="KW-0325">Glycoprotein</keyword>
<keyword id="KW-0444">Lipid biosynthesis</keyword>
<keyword id="KW-0443">Lipid metabolism</keyword>
<keyword id="KW-0472">Membrane</keyword>
<keyword id="KW-0594">Phospholipid biosynthesis</keyword>
<keyword id="KW-1208">Phospholipid metabolism</keyword>
<keyword id="KW-0597">Phosphoprotein</keyword>
<keyword id="KW-1185">Reference proteome</keyword>
<keyword id="KW-0808">Transferase</keyword>
<keyword id="KW-0812">Transmembrane</keyword>
<keyword id="KW-1133">Transmembrane helix</keyword>
<dbReference type="EC" id="2.7.8.29" evidence="1"/>
<dbReference type="EMBL" id="AC118351">
    <property type="status" value="NOT_ANNOTATED_CDS"/>
    <property type="molecule type" value="Genomic_DNA"/>
</dbReference>
<dbReference type="EMBL" id="CH473953">
    <property type="protein sequence ID" value="EDM11981.1"/>
    <property type="molecule type" value="Genomic_DNA"/>
</dbReference>
<dbReference type="EMBL" id="BC166496">
    <property type="protein sequence ID" value="AAI66496.1"/>
    <property type="molecule type" value="mRNA"/>
</dbReference>
<dbReference type="RefSeq" id="NP_001099786.1">
    <property type="nucleotide sequence ID" value="NM_001106316.1"/>
</dbReference>
<dbReference type="SMR" id="B2GV22"/>
<dbReference type="FunCoup" id="B2GV22">
    <property type="interactions" value="1631"/>
</dbReference>
<dbReference type="STRING" id="10116.ENSRNOP00000021925"/>
<dbReference type="GlyCosmos" id="B2GV22">
    <property type="glycosylation" value="1 site, No reported glycans"/>
</dbReference>
<dbReference type="GlyGen" id="B2GV22">
    <property type="glycosylation" value="1 site"/>
</dbReference>
<dbReference type="iPTMnet" id="B2GV22"/>
<dbReference type="PhosphoSitePlus" id="B2GV22"/>
<dbReference type="PaxDb" id="10116-ENSRNOP00000021925"/>
<dbReference type="PeptideAtlas" id="B2GV22"/>
<dbReference type="Ensembl" id="ENSRNOT00000021925.5">
    <property type="protein sequence ID" value="ENSRNOP00000021925.3"/>
    <property type="gene ID" value="ENSRNOG00000015912.5"/>
</dbReference>
<dbReference type="GeneID" id="293620"/>
<dbReference type="KEGG" id="rno:293620"/>
<dbReference type="UCSC" id="RGD:1307914">
    <property type="organism name" value="rat"/>
</dbReference>
<dbReference type="AGR" id="RGD:1307914"/>
<dbReference type="CTD" id="81490"/>
<dbReference type="RGD" id="1307914">
    <property type="gene designation" value="Ptdss2"/>
</dbReference>
<dbReference type="eggNOG" id="KOG2735">
    <property type="taxonomic scope" value="Eukaryota"/>
</dbReference>
<dbReference type="GeneTree" id="ENSGT00530000063576"/>
<dbReference type="HOGENOM" id="CLU_037661_4_1_1"/>
<dbReference type="InParanoid" id="B2GV22"/>
<dbReference type="OMA" id="QHVLPNF"/>
<dbReference type="OrthoDB" id="10265393at2759"/>
<dbReference type="PhylomeDB" id="B2GV22"/>
<dbReference type="TreeFam" id="TF300012"/>
<dbReference type="Reactome" id="R-RNO-1483101">
    <property type="pathway name" value="Synthesis of PS"/>
</dbReference>
<dbReference type="UniPathway" id="UPA00948"/>
<dbReference type="PRO" id="PR:B2GV22"/>
<dbReference type="Proteomes" id="UP000002494">
    <property type="component" value="Chromosome 1"/>
</dbReference>
<dbReference type="Proteomes" id="UP000234681">
    <property type="component" value="Chromosome 1"/>
</dbReference>
<dbReference type="Bgee" id="ENSRNOG00000015912">
    <property type="expression patterns" value="Expressed in frontal cortex and 19 other cell types or tissues"/>
</dbReference>
<dbReference type="GO" id="GO:0005789">
    <property type="term" value="C:endoplasmic reticulum membrane"/>
    <property type="evidence" value="ECO:0000266"/>
    <property type="project" value="RGD"/>
</dbReference>
<dbReference type="GO" id="GO:0016020">
    <property type="term" value="C:membrane"/>
    <property type="evidence" value="ECO:0000266"/>
    <property type="project" value="RGD"/>
</dbReference>
<dbReference type="GO" id="GO:0003882">
    <property type="term" value="F:CDP-diacylglycerol-serine O-phosphatidyltransferase activity"/>
    <property type="evidence" value="ECO:0000266"/>
    <property type="project" value="RGD"/>
</dbReference>
<dbReference type="GO" id="GO:0106245">
    <property type="term" value="F:L-serine-phosphatidylethanolamine phosphatidyltransferase activity"/>
    <property type="evidence" value="ECO:0000266"/>
    <property type="project" value="RGD"/>
</dbReference>
<dbReference type="GO" id="GO:0006659">
    <property type="term" value="P:phosphatidylserine biosynthetic process"/>
    <property type="evidence" value="ECO:0000266"/>
    <property type="project" value="RGD"/>
</dbReference>
<dbReference type="InterPro" id="IPR004277">
    <property type="entry name" value="PSS"/>
</dbReference>
<dbReference type="PANTHER" id="PTHR15362">
    <property type="entry name" value="PHOSPHATIDYLINOSITOL SYNTHASE"/>
    <property type="match status" value="1"/>
</dbReference>
<dbReference type="PANTHER" id="PTHR15362:SF7">
    <property type="entry name" value="PHOSPHATIDYLSERINE SYNTHASE 2"/>
    <property type="match status" value="1"/>
</dbReference>
<dbReference type="Pfam" id="PF03034">
    <property type="entry name" value="PSS"/>
    <property type="match status" value="1"/>
</dbReference>
<sequence length="471" mass="54722">MRRGERRVAGGSGSESPLLEGRRSTESEVYDDGTNTFFWRAHTLTVLFILTCALGYVTLLEETPQDTAYNTKRGIVASILVFLCFGVTQAKDGPFSRPHPAYWRFWLCVSVVYELFLIFILFQTVHDGRQFLKYVDPRLGVPLPERDYGGNCLIYDADNKTDPFHNIWDKLDGFVPAHFIGWYLKTLMIRDWWMCMIISVMFEFLEYSLEHQLPNFSECWWDHWIMDVLLCNGLGIYCGMKTLEWLSLKTYKWQGLWNIPTYKGKMKRIAFQFTPYSWVRFEWKPASSLHRWLAVCGIILVFLLAELNTFYLKFVLWMPPEHYLVLLRLVFFVNVGGVAMREIYDFMDELKPHRKLGQQAWLVAAITVTELLIVVKYDPHTLTLSLPFYISQCWTLGSILVLTWTVWRFFLRDITMRYKETRRQKQQSHQAINNGDGHPGPEDDLPGTGTAEEEGTTNDGVPAEEGPSAAS</sequence>